<gene>
    <name evidence="7 11" type="primary">ari-1</name>
    <name type="synonym">ari</name>
    <name evidence="8" type="synonym">ari-1a</name>
    <name evidence="11" type="ORF">CG5659</name>
</gene>
<keyword id="KW-0175">Coiled coil</keyword>
<keyword id="KW-0963">Cytoplasm</keyword>
<keyword id="KW-0479">Metal-binding</keyword>
<keyword id="KW-0539">Nucleus</keyword>
<keyword id="KW-0597">Phosphoprotein</keyword>
<keyword id="KW-1185">Reference proteome</keyword>
<keyword id="KW-0677">Repeat</keyword>
<keyword id="KW-0808">Transferase</keyword>
<keyword id="KW-0833">Ubl conjugation pathway</keyword>
<keyword id="KW-0862">Zinc</keyword>
<keyword id="KW-0863">Zinc-finger</keyword>
<feature type="chain" id="PRO_0000055754" description="E3 ubiquitin-protein ligase ariadne-1">
    <location>
        <begin position="1"/>
        <end position="503"/>
    </location>
</feature>
<feature type="zinc finger region" description="RING-type 1" evidence="2">
    <location>
        <begin position="133"/>
        <end position="183"/>
    </location>
</feature>
<feature type="zinc finger region" description="IBR-type" evidence="2">
    <location>
        <begin position="203"/>
        <end position="264"/>
    </location>
</feature>
<feature type="zinc finger region" description="RING-type 2; atypical" evidence="2">
    <location>
        <begin position="291"/>
        <end position="322"/>
    </location>
</feature>
<feature type="region of interest" description="Disordered" evidence="3">
    <location>
        <begin position="1"/>
        <end position="40"/>
    </location>
</feature>
<feature type="region of interest" description="TRIAD supradomain" evidence="2">
    <location>
        <begin position="129"/>
        <end position="340"/>
    </location>
</feature>
<feature type="region of interest" description="Important for interaction with Ubc10" evidence="4">
    <location>
        <begin position="133"/>
        <end position="201"/>
    </location>
</feature>
<feature type="coiled-coil region" evidence="1">
    <location>
        <begin position="341"/>
        <end position="361"/>
    </location>
</feature>
<feature type="compositionally biased region" description="Acidic residues" evidence="3">
    <location>
        <begin position="1"/>
        <end position="11"/>
    </location>
</feature>
<feature type="compositionally biased region" description="Low complexity" evidence="3">
    <location>
        <begin position="12"/>
        <end position="21"/>
    </location>
</feature>
<feature type="active site" evidence="2">
    <location>
        <position position="304"/>
    </location>
</feature>
<feature type="binding site" evidence="2">
    <location>
        <position position="133"/>
    </location>
    <ligand>
        <name>Zn(2+)</name>
        <dbReference type="ChEBI" id="CHEBI:29105"/>
        <label>1</label>
    </ligand>
</feature>
<feature type="binding site" evidence="2">
    <location>
        <position position="136"/>
    </location>
    <ligand>
        <name>Zn(2+)</name>
        <dbReference type="ChEBI" id="CHEBI:29105"/>
        <label>1</label>
    </ligand>
</feature>
<feature type="binding site" evidence="2">
    <location>
        <position position="150"/>
    </location>
    <ligand>
        <name>Zn(2+)</name>
        <dbReference type="ChEBI" id="CHEBI:29105"/>
        <label>2</label>
    </ligand>
</feature>
<feature type="binding site" evidence="2">
    <location>
        <position position="152"/>
    </location>
    <ligand>
        <name>Zn(2+)</name>
        <dbReference type="ChEBI" id="CHEBI:29105"/>
        <label>2</label>
    </ligand>
</feature>
<feature type="binding site" evidence="2">
    <location>
        <position position="155"/>
    </location>
    <ligand>
        <name>Zn(2+)</name>
        <dbReference type="ChEBI" id="CHEBI:29105"/>
        <label>1</label>
    </ligand>
</feature>
<feature type="binding site" evidence="2">
    <location>
        <position position="158"/>
    </location>
    <ligand>
        <name>Zn(2+)</name>
        <dbReference type="ChEBI" id="CHEBI:29105"/>
        <label>1</label>
    </ligand>
</feature>
<feature type="binding site" evidence="2">
    <location>
        <position position="178"/>
    </location>
    <ligand>
        <name>Zn(2+)</name>
        <dbReference type="ChEBI" id="CHEBI:29105"/>
        <label>2</label>
    </ligand>
</feature>
<feature type="binding site" evidence="2">
    <location>
        <position position="183"/>
    </location>
    <ligand>
        <name>Zn(2+)</name>
        <dbReference type="ChEBI" id="CHEBI:29105"/>
        <label>2</label>
    </ligand>
</feature>
<feature type="binding site" evidence="2">
    <location>
        <position position="223"/>
    </location>
    <ligand>
        <name>Zn(2+)</name>
        <dbReference type="ChEBI" id="CHEBI:29105"/>
        <label>3</label>
    </ligand>
</feature>
<feature type="binding site" evidence="2">
    <location>
        <position position="228"/>
    </location>
    <ligand>
        <name>Zn(2+)</name>
        <dbReference type="ChEBI" id="CHEBI:29105"/>
        <label>3</label>
    </ligand>
</feature>
<feature type="binding site" evidence="2">
    <location>
        <position position="244"/>
    </location>
    <ligand>
        <name>Zn(2+)</name>
        <dbReference type="ChEBI" id="CHEBI:29105"/>
        <label>3</label>
    </ligand>
</feature>
<feature type="binding site" evidence="2">
    <location>
        <position position="246"/>
    </location>
    <ligand>
        <name>Zn(2+)</name>
        <dbReference type="ChEBI" id="CHEBI:29105"/>
        <label>3</label>
    </ligand>
</feature>
<feature type="binding site" evidence="2">
    <location>
        <position position="251"/>
    </location>
    <ligand>
        <name>Zn(2+)</name>
        <dbReference type="ChEBI" id="CHEBI:29105"/>
        <label>4</label>
    </ligand>
</feature>
<feature type="binding site" evidence="2">
    <location>
        <position position="254"/>
    </location>
    <ligand>
        <name>Zn(2+)</name>
        <dbReference type="ChEBI" id="CHEBI:29105"/>
        <label>4</label>
    </ligand>
</feature>
<feature type="binding site" evidence="2">
    <location>
        <position position="259"/>
    </location>
    <ligand>
        <name>Zn(2+)</name>
        <dbReference type="ChEBI" id="CHEBI:29105"/>
        <label>4</label>
    </ligand>
</feature>
<feature type="binding site" evidence="2">
    <location>
        <position position="264"/>
    </location>
    <ligand>
        <name>Zn(2+)</name>
        <dbReference type="ChEBI" id="CHEBI:29105"/>
        <label>4</label>
    </ligand>
</feature>
<feature type="binding site" evidence="2">
    <location>
        <position position="291"/>
    </location>
    <ligand>
        <name>Zn(2+)</name>
        <dbReference type="ChEBI" id="CHEBI:29105"/>
        <label>5</label>
    </ligand>
</feature>
<feature type="binding site" evidence="2">
    <location>
        <position position="294"/>
    </location>
    <ligand>
        <name>Zn(2+)</name>
        <dbReference type="ChEBI" id="CHEBI:29105"/>
        <label>5</label>
    </ligand>
</feature>
<feature type="binding site" evidence="2">
    <location>
        <position position="309"/>
    </location>
    <ligand>
        <name>Zn(2+)</name>
        <dbReference type="ChEBI" id="CHEBI:29105"/>
        <label>5</label>
    </ligand>
</feature>
<feature type="binding site" evidence="2">
    <location>
        <position position="314"/>
    </location>
    <ligand>
        <name>Zn(2+)</name>
        <dbReference type="ChEBI" id="CHEBI:29105"/>
        <label>5</label>
    </ligand>
</feature>
<feature type="binding site" evidence="2">
    <location>
        <position position="319"/>
    </location>
    <ligand>
        <name>Zn(2+)</name>
        <dbReference type="ChEBI" id="CHEBI:29105"/>
        <label>6</label>
    </ligand>
</feature>
<feature type="binding site" evidence="2">
    <location>
        <position position="322"/>
    </location>
    <ligand>
        <name>Zn(2+)</name>
        <dbReference type="ChEBI" id="CHEBI:29105"/>
        <label>6</label>
    </ligand>
</feature>
<feature type="binding site" evidence="2">
    <location>
        <position position="329"/>
    </location>
    <ligand>
        <name>Zn(2+)</name>
        <dbReference type="ChEBI" id="CHEBI:29105"/>
        <label>6</label>
    </ligand>
</feature>
<feature type="binding site" evidence="2">
    <location>
        <position position="336"/>
    </location>
    <ligand>
        <name>Zn(2+)</name>
        <dbReference type="ChEBI" id="CHEBI:29105"/>
        <label>6</label>
    </ligand>
</feature>
<feature type="mutagenesis site" description="In ari-1a; Loss of catalytic activity. Late pupal lethal and adult escapers have a reduced lifespan and thinner bristles. Nuclei in larval muscles (myonuclei) are displaced from the cell membrane, exhibit clustering and morphological defects, likely due to the mislocalization of the LINC complex. Reduced degradation of the LINC complex member koi." evidence="6">
    <original>C</original>
    <variation>Y</variation>
    <location>
        <position position="136"/>
    </location>
</feature>
<feature type="mutagenesis site" description="In ari1-2; lethal phenotype and loss of interaction with Ubc10." evidence="4">
    <original>C</original>
    <variation>Y</variation>
    <location>
        <position position="150"/>
    </location>
</feature>
<feature type="mutagenesis site" description="In ari-1b; Loss of catalytic activity. Late pupal lethal and adult escapers have a reduced lifespan and thinner bristles. Nuclei in larval muscles (myonuclei) are displaced from the cell membrane, exhibit clustering and morphological defects, likely due to the mislocalization of the LINC complex; when associated with P-332." evidence="6">
    <original>V</original>
    <variation>E</variation>
    <location>
        <position position="187"/>
    </location>
</feature>
<feature type="mutagenesis site" description="In ari-1d; late pupal lethal and adult escapers have a reduced lifespan and thinner bristles. Nuclei in larval muscles (myonuclei) are displaced from the cell membrane, exhibit clustering and morphological defects." evidence="6">
    <original>C</original>
    <variation>S</variation>
    <location>
        <position position="223"/>
    </location>
</feature>
<feature type="mutagenesis site" description="Loss of catalytic activity and impaired autoinhibition; when associated with A-377; A-378 and A-450." evidence="6">
    <original>C</original>
    <variation>S</variation>
    <location>
        <position position="304"/>
    </location>
</feature>
<feature type="mutagenesis site" description="In ari1-3; lethal phenotype and no loss of interaction with Ubc10." evidence="4">
    <original>C</original>
    <variation>Y</variation>
    <location>
        <position position="309"/>
    </location>
</feature>
<feature type="mutagenesis site" description="In ari-1b; Loss of catalytic activity. Late pupal lethal and adult escapers have a reduced lifespan and thinner bristles. Nuclei in larval muscles (myonuclei) are displaced from the cell membrane, exhibit clustering and morphological defects, likely due to the mislocalization of the LINC complex; when associated with E-187." evidence="6">
    <original>S</original>
    <variation>P</variation>
    <location>
        <position position="332"/>
    </location>
</feature>
<feature type="mutagenesis site" description="Impairs autoinhibition; when associated with A-378 and A-450. Loss of activity and impaired autoinhibition; when associated with A-378; A-450 and S-304." evidence="6">
    <original>F</original>
    <variation>A</variation>
    <location>
        <position position="377"/>
    </location>
</feature>
<feature type="mutagenesis site" description="Impairs autoinhibition; when associated with A-377 and A-450. Loss of activity and impaired autoinhibition; when associated with A-377; A-450 and S-304." evidence="6">
    <original>E</original>
    <variation>A</variation>
    <location>
        <position position="378"/>
    </location>
</feature>
<feature type="mutagenesis site" description="Impairs autoinhibition; when associated with A-377 and A-378. Loss of activity and impaired autoinhibition; when associated with A-377; A-378 and S-304." evidence="6">
    <original>E</original>
    <variation>A</variation>
    <location>
        <position position="450"/>
    </location>
</feature>
<protein>
    <recommendedName>
        <fullName evidence="9">E3 ubiquitin-protein ligase ariadne-1</fullName>
        <ecNumber evidence="5 6">2.3.2.31</ecNumber>
    </recommendedName>
    <alternativeName>
        <fullName evidence="7">Protein ariadne-1</fullName>
    </alternativeName>
    <alternativeName>
        <fullName evidence="10">RING-type E3 ubiquitin transferase ariadne-1</fullName>
    </alternativeName>
</protein>
<comment type="function">
    <text evidence="4 5 6">Atypical E3 ubiquitin-protein ligase, which catalyzes ubiquitination of target proteins together with ubiquitin-conjugating enzyme E2 Ubc10 (PubMed:10880484, PubMed:21900267, PubMed:29689197). Controls the subcellular localization and morphology of muscle nuclei (myonuclei) by regulating the protein levels and distribution of the LINC (LInker of Nucleoskeleton and Cytoskeleton) complex (PubMed:29689197). Functions by mediating the monoubiquitination of the LINC complex subunit koi leading to its subsequent proteasomal degradation (PubMed:29689197). Appears to function, at least partially redundantly, with the RBR E3 ligase family member park in nuclear localization and morphology (PubMed:29689197). Likely to function in metamorphosis by regulating the proteins levels of EcR isoform A (ECR-A) and its heterodimeric partner usp, via the ubiquitination and subsequent degradation of ECR-A (PubMed:21900267).</text>
</comment>
<comment type="catalytic activity">
    <reaction evidence="5 6">
        <text>[E2 ubiquitin-conjugating enzyme]-S-ubiquitinyl-L-cysteine + [acceptor protein]-L-lysine = [E2 ubiquitin-conjugating enzyme]-L-cysteine + [acceptor protein]-N(6)-ubiquitinyl-L-lysine.</text>
        <dbReference type="EC" id="2.3.2.31"/>
    </reaction>
</comment>
<comment type="subunit">
    <text evidence="4 5 6">Can form homodimers (PubMed:10880484, PubMed:29689197). Interacts (via RING-type 1 zinc finger) with Ubc10 (PubMed:10880484, PubMed:29689197). Interacts with the LINC complex member koi (PubMed:29689197). Interacts with park (PubMed:29689197). Interacts with ari-2 (PubMed:29689197). Specifically interacts with isoform ECR-A of EcR (PubMed:21900267).</text>
</comment>
<comment type="subcellular location">
    <subcellularLocation>
        <location evidence="4">Cytoplasm</location>
    </subcellularLocation>
    <subcellularLocation>
        <location evidence="5">Nucleus</location>
    </subcellularLocation>
    <text evidence="4">Mainly cytoplasmic.</text>
</comment>
<comment type="tissue specificity">
    <text evidence="4 6">Widely expressed, with prominent levels in the nervous system and female gonads.</text>
</comment>
<comment type="developmental stage">
    <text evidence="4">Expressed in all tissues throughout development, with maximum levels reached during metamorphosis and maintained in the adult.</text>
</comment>
<comment type="domain">
    <text evidence="6">Members of the RBR family are atypical E3 ligases. They interact with E2 conjugating enzymes such as Ubc10 and function like HECT-type E3 enzymes: they bind E2s via the first RING-type zinc finger, but require an obligate trans-thiolation step during the ubiquitin transfer, requiring a conserved active site Cys residue in the second RING-type zinc finger. The active site probably forms a thioester intermediate with ubiquitin taken from the active-site cysteine of the E2 before ultimately transferring it to a Lys residue on the substrate.</text>
</comment>
<comment type="PTM">
    <text evidence="6">Autophosphorylated.</text>
</comment>
<comment type="disruption phenotype">
    <text evidence="6">Pharate pupae lethal. Larval muscles exhibit an increase in nuclear clustering.</text>
</comment>
<comment type="similarity">
    <text evidence="10">Belongs to the RBR family. Ariadne subfamily.</text>
</comment>
<evidence type="ECO:0000255" key="1"/>
<evidence type="ECO:0000255" key="2">
    <source>
        <dbReference type="PROSITE-ProRule" id="PRU01221"/>
    </source>
</evidence>
<evidence type="ECO:0000256" key="3">
    <source>
        <dbReference type="SAM" id="MobiDB-lite"/>
    </source>
</evidence>
<evidence type="ECO:0000269" key="4">
    <source>
    </source>
</evidence>
<evidence type="ECO:0000269" key="5">
    <source>
    </source>
</evidence>
<evidence type="ECO:0000269" key="6">
    <source>
    </source>
</evidence>
<evidence type="ECO:0000303" key="7">
    <source>
    </source>
</evidence>
<evidence type="ECO:0000303" key="8">
    <source>
    </source>
</evidence>
<evidence type="ECO:0000303" key="9">
    <source>
    </source>
</evidence>
<evidence type="ECO:0000305" key="10"/>
<evidence type="ECO:0000312" key="11">
    <source>
        <dbReference type="FlyBase" id="FBgn0017418"/>
    </source>
</evidence>
<proteinExistence type="evidence at protein level"/>
<accession>Q94981</accession>
<accession>Q0KHQ9</accession>
<organism>
    <name type="scientific">Drosophila melanogaster</name>
    <name type="common">Fruit fly</name>
    <dbReference type="NCBI Taxonomy" id="7227"/>
    <lineage>
        <taxon>Eukaryota</taxon>
        <taxon>Metazoa</taxon>
        <taxon>Ecdysozoa</taxon>
        <taxon>Arthropoda</taxon>
        <taxon>Hexapoda</taxon>
        <taxon>Insecta</taxon>
        <taxon>Pterygota</taxon>
        <taxon>Neoptera</taxon>
        <taxon>Endopterygota</taxon>
        <taxon>Diptera</taxon>
        <taxon>Brachycera</taxon>
        <taxon>Muscomorpha</taxon>
        <taxon>Ephydroidea</taxon>
        <taxon>Drosophilidae</taxon>
        <taxon>Drosophila</taxon>
        <taxon>Sophophora</taxon>
    </lineage>
</organism>
<reference key="1">
    <citation type="journal article" date="2000" name="Genetics">
        <title>Ariadne-1: a vital Drosophila gene is required in development and defines a new conserved family of ring-finger proteins.</title>
        <authorList>
            <person name="Aguilera M."/>
            <person name="Oliveros M."/>
            <person name="Martinez-Padron M."/>
            <person name="Barbas J.A."/>
            <person name="Ferrus A."/>
        </authorList>
    </citation>
    <scope>NUCLEOTIDE SEQUENCE [GENOMIC DNA / MRNA]</scope>
    <scope>FUNCTION</scope>
    <scope>SUBUNIT</scope>
    <scope>INTERACTION WITH UBC10</scope>
    <scope>SUBCELLULAR LOCATION</scope>
    <scope>TISSUE SPECIFICITY</scope>
    <scope>DEVELOPMENTAL STAGE</scope>
    <scope>MUTAGENESIS OF CYS-150 AND CYS-309</scope>
    <source>
        <strain>Oregon-R</strain>
    </source>
</reference>
<reference key="2">
    <citation type="journal article" date="2000" name="Science">
        <title>The genome sequence of Drosophila melanogaster.</title>
        <authorList>
            <person name="Adams M.D."/>
            <person name="Celniker S.E."/>
            <person name="Holt R.A."/>
            <person name="Evans C.A."/>
            <person name="Gocayne J.D."/>
            <person name="Amanatides P.G."/>
            <person name="Scherer S.E."/>
            <person name="Li P.W."/>
            <person name="Hoskins R.A."/>
            <person name="Galle R.F."/>
            <person name="George R.A."/>
            <person name="Lewis S.E."/>
            <person name="Richards S."/>
            <person name="Ashburner M."/>
            <person name="Henderson S.N."/>
            <person name="Sutton G.G."/>
            <person name="Wortman J.R."/>
            <person name="Yandell M.D."/>
            <person name="Zhang Q."/>
            <person name="Chen L.X."/>
            <person name="Brandon R.C."/>
            <person name="Rogers Y.-H.C."/>
            <person name="Blazej R.G."/>
            <person name="Champe M."/>
            <person name="Pfeiffer B.D."/>
            <person name="Wan K.H."/>
            <person name="Doyle C."/>
            <person name="Baxter E.G."/>
            <person name="Helt G."/>
            <person name="Nelson C.R."/>
            <person name="Miklos G.L.G."/>
            <person name="Abril J.F."/>
            <person name="Agbayani A."/>
            <person name="An H.-J."/>
            <person name="Andrews-Pfannkoch C."/>
            <person name="Baldwin D."/>
            <person name="Ballew R.M."/>
            <person name="Basu A."/>
            <person name="Baxendale J."/>
            <person name="Bayraktaroglu L."/>
            <person name="Beasley E.M."/>
            <person name="Beeson K.Y."/>
            <person name="Benos P.V."/>
            <person name="Berman B.P."/>
            <person name="Bhandari D."/>
            <person name="Bolshakov S."/>
            <person name="Borkova D."/>
            <person name="Botchan M.R."/>
            <person name="Bouck J."/>
            <person name="Brokstein P."/>
            <person name="Brottier P."/>
            <person name="Burtis K.C."/>
            <person name="Busam D.A."/>
            <person name="Butler H."/>
            <person name="Cadieu E."/>
            <person name="Center A."/>
            <person name="Chandra I."/>
            <person name="Cherry J.M."/>
            <person name="Cawley S."/>
            <person name="Dahlke C."/>
            <person name="Davenport L.B."/>
            <person name="Davies P."/>
            <person name="de Pablos B."/>
            <person name="Delcher A."/>
            <person name="Deng Z."/>
            <person name="Mays A.D."/>
            <person name="Dew I."/>
            <person name="Dietz S.M."/>
            <person name="Dodson K."/>
            <person name="Doup L.E."/>
            <person name="Downes M."/>
            <person name="Dugan-Rocha S."/>
            <person name="Dunkov B.C."/>
            <person name="Dunn P."/>
            <person name="Durbin K.J."/>
            <person name="Evangelista C.C."/>
            <person name="Ferraz C."/>
            <person name="Ferriera S."/>
            <person name="Fleischmann W."/>
            <person name="Fosler C."/>
            <person name="Gabrielian A.E."/>
            <person name="Garg N.S."/>
            <person name="Gelbart W.M."/>
            <person name="Glasser K."/>
            <person name="Glodek A."/>
            <person name="Gong F."/>
            <person name="Gorrell J.H."/>
            <person name="Gu Z."/>
            <person name="Guan P."/>
            <person name="Harris M."/>
            <person name="Harris N.L."/>
            <person name="Harvey D.A."/>
            <person name="Heiman T.J."/>
            <person name="Hernandez J.R."/>
            <person name="Houck J."/>
            <person name="Hostin D."/>
            <person name="Houston K.A."/>
            <person name="Howland T.J."/>
            <person name="Wei M.-H."/>
            <person name="Ibegwam C."/>
            <person name="Jalali M."/>
            <person name="Kalush F."/>
            <person name="Karpen G.H."/>
            <person name="Ke Z."/>
            <person name="Kennison J.A."/>
            <person name="Ketchum K.A."/>
            <person name="Kimmel B.E."/>
            <person name="Kodira C.D."/>
            <person name="Kraft C.L."/>
            <person name="Kravitz S."/>
            <person name="Kulp D."/>
            <person name="Lai Z."/>
            <person name="Lasko P."/>
            <person name="Lei Y."/>
            <person name="Levitsky A.A."/>
            <person name="Li J.H."/>
            <person name="Li Z."/>
            <person name="Liang Y."/>
            <person name="Lin X."/>
            <person name="Liu X."/>
            <person name="Mattei B."/>
            <person name="McIntosh T.C."/>
            <person name="McLeod M.P."/>
            <person name="McPherson D."/>
            <person name="Merkulov G."/>
            <person name="Milshina N.V."/>
            <person name="Mobarry C."/>
            <person name="Morris J."/>
            <person name="Moshrefi A."/>
            <person name="Mount S.M."/>
            <person name="Moy M."/>
            <person name="Murphy B."/>
            <person name="Murphy L."/>
            <person name="Muzny D.M."/>
            <person name="Nelson D.L."/>
            <person name="Nelson D.R."/>
            <person name="Nelson K.A."/>
            <person name="Nixon K."/>
            <person name="Nusskern D.R."/>
            <person name="Pacleb J.M."/>
            <person name="Palazzolo M."/>
            <person name="Pittman G.S."/>
            <person name="Pan S."/>
            <person name="Pollard J."/>
            <person name="Puri V."/>
            <person name="Reese M.G."/>
            <person name="Reinert K."/>
            <person name="Remington K."/>
            <person name="Saunders R.D.C."/>
            <person name="Scheeler F."/>
            <person name="Shen H."/>
            <person name="Shue B.C."/>
            <person name="Siden-Kiamos I."/>
            <person name="Simpson M."/>
            <person name="Skupski M.P."/>
            <person name="Smith T.J."/>
            <person name="Spier E."/>
            <person name="Spradling A.C."/>
            <person name="Stapleton M."/>
            <person name="Strong R."/>
            <person name="Sun E."/>
            <person name="Svirskas R."/>
            <person name="Tector C."/>
            <person name="Turner R."/>
            <person name="Venter E."/>
            <person name="Wang A.H."/>
            <person name="Wang X."/>
            <person name="Wang Z.-Y."/>
            <person name="Wassarman D.A."/>
            <person name="Weinstock G.M."/>
            <person name="Weissenbach J."/>
            <person name="Williams S.M."/>
            <person name="Woodage T."/>
            <person name="Worley K.C."/>
            <person name="Wu D."/>
            <person name="Yang S."/>
            <person name="Yao Q.A."/>
            <person name="Ye J."/>
            <person name="Yeh R.-F."/>
            <person name="Zaveri J.S."/>
            <person name="Zhan M."/>
            <person name="Zhang G."/>
            <person name="Zhao Q."/>
            <person name="Zheng L."/>
            <person name="Zheng X.H."/>
            <person name="Zhong F.N."/>
            <person name="Zhong W."/>
            <person name="Zhou X."/>
            <person name="Zhu S.C."/>
            <person name="Zhu X."/>
            <person name="Smith H.O."/>
            <person name="Gibbs R.A."/>
            <person name="Myers E.W."/>
            <person name="Rubin G.M."/>
            <person name="Venter J.C."/>
        </authorList>
    </citation>
    <scope>NUCLEOTIDE SEQUENCE [LARGE SCALE GENOMIC DNA]</scope>
    <source>
        <strain>Berkeley</strain>
    </source>
</reference>
<reference key="3">
    <citation type="journal article" date="2002" name="Genome Biol.">
        <title>Annotation of the Drosophila melanogaster euchromatic genome: a systematic review.</title>
        <authorList>
            <person name="Misra S."/>
            <person name="Crosby M.A."/>
            <person name="Mungall C.J."/>
            <person name="Matthews B.B."/>
            <person name="Campbell K.S."/>
            <person name="Hradecky P."/>
            <person name="Huang Y."/>
            <person name="Kaminker J.S."/>
            <person name="Millburn G.H."/>
            <person name="Prochnik S.E."/>
            <person name="Smith C.D."/>
            <person name="Tupy J.L."/>
            <person name="Whitfield E.J."/>
            <person name="Bayraktaroglu L."/>
            <person name="Berman B.P."/>
            <person name="Bettencourt B.R."/>
            <person name="Celniker S.E."/>
            <person name="de Grey A.D.N.J."/>
            <person name="Drysdale R.A."/>
            <person name="Harris N.L."/>
            <person name="Richter J."/>
            <person name="Russo S."/>
            <person name="Schroeder A.J."/>
            <person name="Shu S.Q."/>
            <person name="Stapleton M."/>
            <person name="Yamada C."/>
            <person name="Ashburner M."/>
            <person name="Gelbart W.M."/>
            <person name="Rubin G.M."/>
            <person name="Lewis S.E."/>
        </authorList>
    </citation>
    <scope>GENOME REANNOTATION</scope>
    <source>
        <strain>Berkeley</strain>
    </source>
</reference>
<reference key="4">
    <citation type="journal article" date="2011" name="Genetics">
        <title>Isoform-specific regulation of a steroid hormone nuclear receptor by an E3 ubiquitin ligase in Drosophila melanogaster.</title>
        <authorList>
            <person name="Gradilla A.C."/>
            <person name="Mansilla A."/>
            <person name="Ferrus A."/>
        </authorList>
    </citation>
    <scope>FUNCTION</scope>
    <scope>CATALYTIC ACTIVITY</scope>
    <scope>INTERACTION WITH ECR (ISOFORM ECR-A)</scope>
    <scope>SUBCELLULAR LOCATION</scope>
</reference>
<reference key="5">
    <citation type="journal article" date="2018" name="Dev. Cell">
        <title>Ari-1 Regulates Myonuclear Organization Together with Parkin and Is Associated with Aortic Aneurysms.</title>
        <authorList>
            <consortium name="University of Washington Center for Mendelian Genomics"/>
            <person name="Tan K.L."/>
            <person name="Haelterman N.A."/>
            <person name="Kwartler C.S."/>
            <person name="Regalado E.S."/>
            <person name="Lee P.T."/>
            <person name="Nagarkar-Jaiswal S."/>
            <person name="Guo D.C."/>
            <person name="Duraine L."/>
            <person name="Wangler M.F."/>
            <person name="Bamshad M.J."/>
            <person name="Nickerson D.A."/>
            <person name="Lin G."/>
            <person name="Milewicz D.M."/>
            <person name="Bellen H.J."/>
        </authorList>
    </citation>
    <scope>FUNCTION</scope>
    <scope>CATALYTIC ACTIVITY</scope>
    <scope>SUBUNIT</scope>
    <scope>INTERACTION WITH UBC10; KOI; PARK AND ARI-2</scope>
    <scope>TISSUE SPECIFICITY</scope>
    <scope>DOMAIN</scope>
    <scope>AUTOPHOSPHORYLATION</scope>
    <scope>DISRUPTION PHENOTYPE</scope>
    <scope>MUTAGENESIS OF CYS-136; VAL-187; CYS-223; CYS-304; SER-332; PHE-377; GLU-378 AND GLU-450</scope>
</reference>
<dbReference type="EC" id="2.3.2.31" evidence="5 6"/>
<dbReference type="EMBL" id="X98309">
    <property type="protein sequence ID" value="CAA66953.1"/>
    <property type="molecule type" value="Genomic_DNA"/>
</dbReference>
<dbReference type="EMBL" id="X98310">
    <property type="protein sequence ID" value="CAA66954.1"/>
    <property type="molecule type" value="mRNA"/>
</dbReference>
<dbReference type="EMBL" id="AE014298">
    <property type="protein sequence ID" value="AAN09462.1"/>
    <property type="molecule type" value="Genomic_DNA"/>
</dbReference>
<dbReference type="RefSeq" id="NP_001245736.1">
    <property type="nucleotide sequence ID" value="NM_001258807.3"/>
</dbReference>
<dbReference type="RefSeq" id="NP_001259671.1">
    <property type="nucleotide sequence ID" value="NM_001272742.2"/>
</dbReference>
<dbReference type="RefSeq" id="NP_001259672.1">
    <property type="nucleotide sequence ID" value="NM_001272743.1"/>
</dbReference>
<dbReference type="RefSeq" id="NP_523399.1">
    <property type="nucleotide sequence ID" value="NM_078675.4"/>
</dbReference>
<dbReference type="RefSeq" id="NP_728145.1">
    <property type="nucleotide sequence ID" value="NM_167610.4"/>
</dbReference>
<dbReference type="RefSeq" id="NP_996500.1">
    <property type="nucleotide sequence ID" value="NM_206777.2"/>
</dbReference>
<dbReference type="SMR" id="Q94981"/>
<dbReference type="BioGRID" id="59116">
    <property type="interactions" value="13"/>
</dbReference>
<dbReference type="DIP" id="DIP-17812N"/>
<dbReference type="FunCoup" id="Q94981">
    <property type="interactions" value="2652"/>
</dbReference>
<dbReference type="IntAct" id="Q94981">
    <property type="interactions" value="1"/>
</dbReference>
<dbReference type="STRING" id="7227.FBpp0297199"/>
<dbReference type="PaxDb" id="7227-FBpp0297199"/>
<dbReference type="EnsemblMetazoa" id="FBtr0089506">
    <property type="protein sequence ID" value="FBpp0088499"/>
    <property type="gene ID" value="FBgn0017418"/>
</dbReference>
<dbReference type="EnsemblMetazoa" id="FBtr0089507">
    <property type="protein sequence ID" value="FBpp0088500"/>
    <property type="gene ID" value="FBgn0017418"/>
</dbReference>
<dbReference type="EnsemblMetazoa" id="FBtr0089508">
    <property type="protein sequence ID" value="FBpp0089023"/>
    <property type="gene ID" value="FBgn0017418"/>
</dbReference>
<dbReference type="EnsemblMetazoa" id="FBtr0306057">
    <property type="protein sequence ID" value="FBpp0297199"/>
    <property type="gene ID" value="FBgn0017418"/>
</dbReference>
<dbReference type="EnsemblMetazoa" id="FBtr0332850">
    <property type="protein sequence ID" value="FBpp0305073"/>
    <property type="gene ID" value="FBgn0017418"/>
</dbReference>
<dbReference type="EnsemblMetazoa" id="FBtr0332851">
    <property type="protein sequence ID" value="FBpp0305074"/>
    <property type="gene ID" value="FBgn0017418"/>
</dbReference>
<dbReference type="GeneID" id="32796"/>
<dbReference type="KEGG" id="dme:Dmel_CG5659"/>
<dbReference type="UCSC" id="CG5659-RA">
    <property type="organism name" value="d. melanogaster"/>
</dbReference>
<dbReference type="AGR" id="FB:FBgn0017418"/>
<dbReference type="CTD" id="32796"/>
<dbReference type="FlyBase" id="FBgn0017418">
    <property type="gene designation" value="ari-1"/>
</dbReference>
<dbReference type="VEuPathDB" id="VectorBase:FBgn0017418"/>
<dbReference type="eggNOG" id="KOG1815">
    <property type="taxonomic scope" value="Eukaryota"/>
</dbReference>
<dbReference type="GeneTree" id="ENSGT00940000155744"/>
<dbReference type="HOGENOM" id="CLU_009823_4_2_1"/>
<dbReference type="InParanoid" id="Q94981"/>
<dbReference type="OMA" id="HRFCMIC"/>
<dbReference type="OrthoDB" id="10009520at2759"/>
<dbReference type="PhylomeDB" id="Q94981"/>
<dbReference type="Reactome" id="R-DME-1169408">
    <property type="pathway name" value="ISG15 antiviral mechanism"/>
</dbReference>
<dbReference type="Reactome" id="R-DME-9833482">
    <property type="pathway name" value="PKR-mediated signaling"/>
</dbReference>
<dbReference type="SignaLink" id="Q94981"/>
<dbReference type="BioGRID-ORCS" id="32796">
    <property type="hits" value="1 hit in 1 CRISPR screen"/>
</dbReference>
<dbReference type="GenomeRNAi" id="32796"/>
<dbReference type="PRO" id="PR:Q94981"/>
<dbReference type="Proteomes" id="UP000000803">
    <property type="component" value="Chromosome X"/>
</dbReference>
<dbReference type="Bgee" id="FBgn0017418">
    <property type="expression patterns" value="Expressed in indirect flight muscle cell (Drosophila) in body wall and 268 other cell types or tissues"/>
</dbReference>
<dbReference type="ExpressionAtlas" id="Q94981">
    <property type="expression patterns" value="baseline and differential"/>
</dbReference>
<dbReference type="GO" id="GO:0005737">
    <property type="term" value="C:cytoplasm"/>
    <property type="evidence" value="ECO:0000318"/>
    <property type="project" value="GO_Central"/>
</dbReference>
<dbReference type="GO" id="GO:0005829">
    <property type="term" value="C:cytosol"/>
    <property type="evidence" value="ECO:0000314"/>
    <property type="project" value="FlyBase"/>
</dbReference>
<dbReference type="GO" id="GO:0005634">
    <property type="term" value="C:nucleus"/>
    <property type="evidence" value="ECO:0000314"/>
    <property type="project" value="FlyBase"/>
</dbReference>
<dbReference type="GO" id="GO:0000151">
    <property type="term" value="C:ubiquitin ligase complex"/>
    <property type="evidence" value="ECO:0000318"/>
    <property type="project" value="GO_Central"/>
</dbReference>
<dbReference type="GO" id="GO:0031624">
    <property type="term" value="F:ubiquitin conjugating enzyme binding"/>
    <property type="evidence" value="ECO:0000353"/>
    <property type="project" value="FlyBase"/>
</dbReference>
<dbReference type="GO" id="GO:0061630">
    <property type="term" value="F:ubiquitin protein ligase activity"/>
    <property type="evidence" value="ECO:0000314"/>
    <property type="project" value="FlyBase"/>
</dbReference>
<dbReference type="GO" id="GO:0008270">
    <property type="term" value="F:zinc ion binding"/>
    <property type="evidence" value="ECO:0000255"/>
    <property type="project" value="FlyBase"/>
</dbReference>
<dbReference type="GO" id="GO:0007029">
    <property type="term" value="P:endoplasmic reticulum organization"/>
    <property type="evidence" value="ECO:0000315"/>
    <property type="project" value="FlyBase"/>
</dbReference>
<dbReference type="GO" id="GO:0048477">
    <property type="term" value="P:oogenesis"/>
    <property type="evidence" value="ECO:0000315"/>
    <property type="project" value="FlyBase"/>
</dbReference>
<dbReference type="GO" id="GO:0050769">
    <property type="term" value="P:positive regulation of neurogenesis"/>
    <property type="evidence" value="ECO:0000315"/>
    <property type="project" value="FlyBase"/>
</dbReference>
<dbReference type="GO" id="GO:1901800">
    <property type="term" value="P:positive regulation of proteasomal protein catabolic process"/>
    <property type="evidence" value="ECO:0000315"/>
    <property type="project" value="FlyBase"/>
</dbReference>
<dbReference type="GO" id="GO:0006513">
    <property type="term" value="P:protein monoubiquitination"/>
    <property type="evidence" value="ECO:0000314"/>
    <property type="project" value="FlyBase"/>
</dbReference>
<dbReference type="GO" id="GO:0016567">
    <property type="term" value="P:protein ubiquitination"/>
    <property type="evidence" value="ECO:0000314"/>
    <property type="project" value="FlyBase"/>
</dbReference>
<dbReference type="GO" id="GO:0006511">
    <property type="term" value="P:ubiquitin-dependent protein catabolic process"/>
    <property type="evidence" value="ECO:0000315"/>
    <property type="project" value="FlyBase"/>
</dbReference>
<dbReference type="CDD" id="cd20343">
    <property type="entry name" value="BRcat_RBR_HHARI-like"/>
    <property type="match status" value="1"/>
</dbReference>
<dbReference type="CDD" id="cd20356">
    <property type="entry name" value="Rcat_RBR_HHARI-like"/>
    <property type="match status" value="1"/>
</dbReference>
<dbReference type="CDD" id="cd16626">
    <property type="entry name" value="RING-HC_RBR_HHARI"/>
    <property type="match status" value="1"/>
</dbReference>
<dbReference type="FunFam" id="1.20.120.1750:FF:000002">
    <property type="entry name" value="RBR-type E3 ubiquitin transferase"/>
    <property type="match status" value="1"/>
</dbReference>
<dbReference type="FunFam" id="3.30.40.10:FF:000019">
    <property type="entry name" value="RBR-type E3 ubiquitin transferase"/>
    <property type="match status" value="1"/>
</dbReference>
<dbReference type="Gene3D" id="1.20.120.1750">
    <property type="match status" value="1"/>
</dbReference>
<dbReference type="Gene3D" id="3.30.40.10">
    <property type="entry name" value="Zinc/RING finger domain, C3HC4 (zinc finger)"/>
    <property type="match status" value="1"/>
</dbReference>
<dbReference type="InterPro" id="IPR045840">
    <property type="entry name" value="Ariadne"/>
</dbReference>
<dbReference type="InterPro" id="IPR048962">
    <property type="entry name" value="ARIH1-like_UBL"/>
</dbReference>
<dbReference type="InterPro" id="IPR031127">
    <property type="entry name" value="E3_UB_ligase_RBR"/>
</dbReference>
<dbReference type="InterPro" id="IPR002867">
    <property type="entry name" value="IBR_dom"/>
</dbReference>
<dbReference type="InterPro" id="IPR044066">
    <property type="entry name" value="TRIAD_supradom"/>
</dbReference>
<dbReference type="InterPro" id="IPR018957">
    <property type="entry name" value="Znf_C3HC4_RING-type"/>
</dbReference>
<dbReference type="InterPro" id="IPR001841">
    <property type="entry name" value="Znf_RING"/>
</dbReference>
<dbReference type="InterPro" id="IPR013083">
    <property type="entry name" value="Znf_RING/FYVE/PHD"/>
</dbReference>
<dbReference type="PANTHER" id="PTHR11685">
    <property type="entry name" value="RBR FAMILY RING FINGER AND IBR DOMAIN-CONTAINING"/>
    <property type="match status" value="1"/>
</dbReference>
<dbReference type="Pfam" id="PF19422">
    <property type="entry name" value="Ariadne"/>
    <property type="match status" value="1"/>
</dbReference>
<dbReference type="Pfam" id="PF01485">
    <property type="entry name" value="IBR"/>
    <property type="match status" value="1"/>
</dbReference>
<dbReference type="Pfam" id="PF22191">
    <property type="entry name" value="IBR_1"/>
    <property type="match status" value="1"/>
</dbReference>
<dbReference type="Pfam" id="PF21235">
    <property type="entry name" value="UBA_ARI1"/>
    <property type="match status" value="1"/>
</dbReference>
<dbReference type="Pfam" id="PF00097">
    <property type="entry name" value="zf-C3HC4"/>
    <property type="match status" value="1"/>
</dbReference>
<dbReference type="SMART" id="SM00647">
    <property type="entry name" value="IBR"/>
    <property type="match status" value="2"/>
</dbReference>
<dbReference type="SUPFAM" id="SSF57850">
    <property type="entry name" value="RING/U-box"/>
    <property type="match status" value="3"/>
</dbReference>
<dbReference type="PROSITE" id="PS51873">
    <property type="entry name" value="TRIAD"/>
    <property type="match status" value="1"/>
</dbReference>
<dbReference type="PROSITE" id="PS50089">
    <property type="entry name" value="ZF_RING_2"/>
    <property type="match status" value="1"/>
</dbReference>
<sequence length="503" mass="58932">MDSDNDNDFCDNVDSGNVSSGDDGDDDFGMEVDLPSSADRQMDQDDYQYKVLTTDEIVQHQREIIDEANLLLKLPTPTTRILLNHFKWDKEKLLEKYFDDNTDEFFKCAHVINPFNATEAIKQKTSRSQCEECEICFSQLPPDSMAGLECGHRFCMPCWHEYLSTKIVAEGLGQTISCAAHGCDILVDDVTVANLVTDARVRVKYQQLITNSFVECNQLLRWCPSVDCTYAVKVPYAEPRRVHCKCGHVFCFACGENWHDPVKCRWLKKWIKKCDDDSETSNWIAANTKECPRCSVTIEKDGGCNHMVCKNQNCKNEFCWVCLGSWEPHGSSWYNCNRYDEDEAKTARDAQEKLRSSLARYLHYYNRYMNHMQSMKFENKLYASVKQKMEEMQQHNMSWIEVQFLKKAVDILCQCRQTLMYTYVFAYYLKKNNQSMIFEDNQKDLESATEMLSEYLERDITSENLADIKQKVQDKYRYCEKRCSVLLKHVHEGYDKEWWEYTE</sequence>
<name>ARI1_DROME</name>